<organism>
    <name type="scientific">Pyrococcus abyssi (strain GE5 / Orsay)</name>
    <dbReference type="NCBI Taxonomy" id="272844"/>
    <lineage>
        <taxon>Archaea</taxon>
        <taxon>Methanobacteriati</taxon>
        <taxon>Methanobacteriota</taxon>
        <taxon>Thermococci</taxon>
        <taxon>Thermococcales</taxon>
        <taxon>Thermococcaceae</taxon>
        <taxon>Pyrococcus</taxon>
    </lineage>
</organism>
<dbReference type="EC" id="6.1.1.10" evidence="1"/>
<dbReference type="EMBL" id="AJ248286">
    <property type="protein sequence ID" value="CAB49895.1"/>
    <property type="molecule type" value="Genomic_DNA"/>
</dbReference>
<dbReference type="EMBL" id="HE613800">
    <property type="protein sequence ID" value="CCE70393.1"/>
    <property type="molecule type" value="Genomic_DNA"/>
</dbReference>
<dbReference type="PIR" id="B75074">
    <property type="entry name" value="B75074"/>
</dbReference>
<dbReference type="RefSeq" id="WP_010868104.1">
    <property type="nucleotide sequence ID" value="NC_000868.1"/>
</dbReference>
<dbReference type="PDB" id="1MKH">
    <property type="method" value="X-ray"/>
    <property type="resolution" value="2.01 A"/>
    <property type="chains" value="A=616-722"/>
</dbReference>
<dbReference type="PDB" id="1RQG">
    <property type="method" value="X-ray"/>
    <property type="resolution" value="2.90 A"/>
    <property type="chains" value="A=1-722"/>
</dbReference>
<dbReference type="PDBsum" id="1MKH"/>
<dbReference type="PDBsum" id="1RQG"/>
<dbReference type="SMR" id="Q9V011"/>
<dbReference type="STRING" id="272844.PAB2364"/>
<dbReference type="KEGG" id="pab:PAB2364"/>
<dbReference type="PATRIC" id="fig|272844.11.peg.1039"/>
<dbReference type="eggNOG" id="arCOG00810">
    <property type="taxonomic scope" value="Archaea"/>
</dbReference>
<dbReference type="HOGENOM" id="CLU_009710_1_2_2"/>
<dbReference type="OrthoDB" id="371856at2157"/>
<dbReference type="PhylomeDB" id="Q9V011"/>
<dbReference type="BRENDA" id="6.1.1.10">
    <property type="organism ID" value="5242"/>
</dbReference>
<dbReference type="EvolutionaryTrace" id="Q9V011"/>
<dbReference type="Proteomes" id="UP000000810">
    <property type="component" value="Chromosome"/>
</dbReference>
<dbReference type="Proteomes" id="UP000009139">
    <property type="component" value="Chromosome"/>
</dbReference>
<dbReference type="GO" id="GO:0005829">
    <property type="term" value="C:cytosol"/>
    <property type="evidence" value="ECO:0007669"/>
    <property type="project" value="TreeGrafter"/>
</dbReference>
<dbReference type="GO" id="GO:0005524">
    <property type="term" value="F:ATP binding"/>
    <property type="evidence" value="ECO:0007669"/>
    <property type="project" value="UniProtKB-UniRule"/>
</dbReference>
<dbReference type="GO" id="GO:0046872">
    <property type="term" value="F:metal ion binding"/>
    <property type="evidence" value="ECO:0007669"/>
    <property type="project" value="UniProtKB-KW"/>
</dbReference>
<dbReference type="GO" id="GO:0004825">
    <property type="term" value="F:methionine-tRNA ligase activity"/>
    <property type="evidence" value="ECO:0007669"/>
    <property type="project" value="UniProtKB-UniRule"/>
</dbReference>
<dbReference type="GO" id="GO:0000049">
    <property type="term" value="F:tRNA binding"/>
    <property type="evidence" value="ECO:0007669"/>
    <property type="project" value="UniProtKB-KW"/>
</dbReference>
<dbReference type="GO" id="GO:0006431">
    <property type="term" value="P:methionyl-tRNA aminoacylation"/>
    <property type="evidence" value="ECO:0007669"/>
    <property type="project" value="UniProtKB-UniRule"/>
</dbReference>
<dbReference type="CDD" id="cd07957">
    <property type="entry name" value="Anticodon_Ia_Met"/>
    <property type="match status" value="1"/>
</dbReference>
<dbReference type="CDD" id="cd00814">
    <property type="entry name" value="MetRS_core"/>
    <property type="match status" value="1"/>
</dbReference>
<dbReference type="CDD" id="cd02798">
    <property type="entry name" value="tRNA_bind_CsaA"/>
    <property type="match status" value="1"/>
</dbReference>
<dbReference type="FunFam" id="2.20.28.20:FF:000001">
    <property type="entry name" value="Methionine--tRNA ligase"/>
    <property type="match status" value="1"/>
</dbReference>
<dbReference type="FunFam" id="2.40.50.140:FF:000042">
    <property type="entry name" value="Methionine--tRNA ligase"/>
    <property type="match status" value="1"/>
</dbReference>
<dbReference type="Gene3D" id="3.40.50.620">
    <property type="entry name" value="HUPs"/>
    <property type="match status" value="1"/>
</dbReference>
<dbReference type="Gene3D" id="1.10.730.10">
    <property type="entry name" value="Isoleucyl-tRNA Synthetase, Domain 1"/>
    <property type="match status" value="1"/>
</dbReference>
<dbReference type="Gene3D" id="2.20.28.20">
    <property type="entry name" value="Methionyl-tRNA synthetase, Zn-domain"/>
    <property type="match status" value="1"/>
</dbReference>
<dbReference type="Gene3D" id="2.40.50.140">
    <property type="entry name" value="Nucleic acid-binding proteins"/>
    <property type="match status" value="1"/>
</dbReference>
<dbReference type="HAMAP" id="MF_00098">
    <property type="entry name" value="Met_tRNA_synth_type1"/>
    <property type="match status" value="1"/>
</dbReference>
<dbReference type="InterPro" id="IPR001412">
    <property type="entry name" value="aa-tRNA-synth_I_CS"/>
</dbReference>
<dbReference type="InterPro" id="IPR041872">
    <property type="entry name" value="Anticodon_Met"/>
</dbReference>
<dbReference type="InterPro" id="IPR004495">
    <property type="entry name" value="Met-tRNA-synth_bsu_C"/>
</dbReference>
<dbReference type="InterPro" id="IPR023458">
    <property type="entry name" value="Met-tRNA_ligase_1"/>
</dbReference>
<dbReference type="InterPro" id="IPR014758">
    <property type="entry name" value="Met-tRNA_synth"/>
</dbReference>
<dbReference type="InterPro" id="IPR015413">
    <property type="entry name" value="Methionyl/Leucyl_tRNA_Synth"/>
</dbReference>
<dbReference type="InterPro" id="IPR033911">
    <property type="entry name" value="MetRS_core"/>
</dbReference>
<dbReference type="InterPro" id="IPR029038">
    <property type="entry name" value="MetRS_Zn"/>
</dbReference>
<dbReference type="InterPro" id="IPR012340">
    <property type="entry name" value="NA-bd_OB-fold"/>
</dbReference>
<dbReference type="InterPro" id="IPR014729">
    <property type="entry name" value="Rossmann-like_a/b/a_fold"/>
</dbReference>
<dbReference type="InterPro" id="IPR002547">
    <property type="entry name" value="tRNA-bd_dom"/>
</dbReference>
<dbReference type="InterPro" id="IPR009080">
    <property type="entry name" value="tRNAsynth_Ia_anticodon-bd"/>
</dbReference>
<dbReference type="NCBIfam" id="TIGR00398">
    <property type="entry name" value="metG"/>
    <property type="match status" value="1"/>
</dbReference>
<dbReference type="NCBIfam" id="TIGR00399">
    <property type="entry name" value="metG_C_term"/>
    <property type="match status" value="1"/>
</dbReference>
<dbReference type="NCBIfam" id="NF001100">
    <property type="entry name" value="PRK00133.1"/>
    <property type="match status" value="1"/>
</dbReference>
<dbReference type="PANTHER" id="PTHR45765">
    <property type="entry name" value="METHIONINE--TRNA LIGASE"/>
    <property type="match status" value="1"/>
</dbReference>
<dbReference type="PANTHER" id="PTHR45765:SF1">
    <property type="entry name" value="METHIONINE--TRNA LIGASE, CYTOPLASMIC"/>
    <property type="match status" value="1"/>
</dbReference>
<dbReference type="Pfam" id="PF19303">
    <property type="entry name" value="Anticodon_3"/>
    <property type="match status" value="1"/>
</dbReference>
<dbReference type="Pfam" id="PF09334">
    <property type="entry name" value="tRNA-synt_1g"/>
    <property type="match status" value="1"/>
</dbReference>
<dbReference type="Pfam" id="PF01588">
    <property type="entry name" value="tRNA_bind"/>
    <property type="match status" value="1"/>
</dbReference>
<dbReference type="PRINTS" id="PR01041">
    <property type="entry name" value="TRNASYNTHMET"/>
</dbReference>
<dbReference type="SUPFAM" id="SSF47323">
    <property type="entry name" value="Anticodon-binding domain of a subclass of class I aminoacyl-tRNA synthetases"/>
    <property type="match status" value="1"/>
</dbReference>
<dbReference type="SUPFAM" id="SSF57770">
    <property type="entry name" value="Methionyl-tRNA synthetase (MetRS), Zn-domain"/>
    <property type="match status" value="1"/>
</dbReference>
<dbReference type="SUPFAM" id="SSF50249">
    <property type="entry name" value="Nucleic acid-binding proteins"/>
    <property type="match status" value="1"/>
</dbReference>
<dbReference type="SUPFAM" id="SSF52374">
    <property type="entry name" value="Nucleotidylyl transferase"/>
    <property type="match status" value="1"/>
</dbReference>
<dbReference type="PROSITE" id="PS00178">
    <property type="entry name" value="AA_TRNA_LIGASE_I"/>
    <property type="match status" value="1"/>
</dbReference>
<dbReference type="PROSITE" id="PS50886">
    <property type="entry name" value="TRBD"/>
    <property type="match status" value="1"/>
</dbReference>
<feature type="chain" id="PRO_0000139194" description="Methionine--tRNA ligase">
    <location>
        <begin position="1"/>
        <end position="722"/>
    </location>
</feature>
<feature type="domain" description="tRNA-binding" evidence="1">
    <location>
        <begin position="622"/>
        <end position="722"/>
    </location>
</feature>
<feature type="short sequence motif" description="'HIGH' region">
    <location>
        <begin position="11"/>
        <end position="21"/>
    </location>
</feature>
<feature type="short sequence motif" description="'KMSKS' region">
    <location>
        <begin position="344"/>
        <end position="348"/>
    </location>
</feature>
<feature type="binding site" evidence="1">
    <location>
        <position position="143"/>
    </location>
    <ligand>
        <name>Zn(2+)</name>
        <dbReference type="ChEBI" id="CHEBI:29105"/>
    </ligand>
</feature>
<feature type="binding site" evidence="1">
    <location>
        <position position="146"/>
    </location>
    <ligand>
        <name>Zn(2+)</name>
        <dbReference type="ChEBI" id="CHEBI:29105"/>
    </ligand>
</feature>
<feature type="binding site" evidence="1">
    <location>
        <position position="156"/>
    </location>
    <ligand>
        <name>Zn(2+)</name>
        <dbReference type="ChEBI" id="CHEBI:29105"/>
    </ligand>
</feature>
<feature type="binding site" evidence="1">
    <location>
        <position position="159"/>
    </location>
    <ligand>
        <name>Zn(2+)</name>
        <dbReference type="ChEBI" id="CHEBI:29105"/>
    </ligand>
</feature>
<feature type="binding site" evidence="1">
    <location>
        <position position="347"/>
    </location>
    <ligand>
        <name>ATP</name>
        <dbReference type="ChEBI" id="CHEBI:30616"/>
    </ligand>
</feature>
<feature type="strand" evidence="3">
    <location>
        <begin position="3"/>
        <end position="8"/>
    </location>
</feature>
<feature type="helix" evidence="3">
    <location>
        <begin position="19"/>
        <end position="25"/>
    </location>
</feature>
<feature type="helix" evidence="3">
    <location>
        <begin position="27"/>
        <end position="38"/>
    </location>
</feature>
<feature type="strand" evidence="3">
    <location>
        <begin position="42"/>
        <end position="50"/>
    </location>
</feature>
<feature type="helix" evidence="3">
    <location>
        <begin position="54"/>
        <end position="63"/>
    </location>
</feature>
<feature type="helix" evidence="3">
    <location>
        <begin position="67"/>
        <end position="85"/>
    </location>
</feature>
<feature type="strand" evidence="3">
    <location>
        <begin position="90"/>
        <end position="94"/>
    </location>
</feature>
<feature type="helix" evidence="3">
    <location>
        <begin position="98"/>
        <end position="113"/>
    </location>
</feature>
<feature type="strand" evidence="3">
    <location>
        <begin position="117"/>
        <end position="127"/>
    </location>
</feature>
<feature type="turn" evidence="3">
    <location>
        <begin position="128"/>
        <end position="131"/>
    </location>
</feature>
<feature type="helix" evidence="3">
    <location>
        <begin position="136"/>
        <end position="138"/>
    </location>
</feature>
<feature type="strand" evidence="3">
    <location>
        <begin position="144"/>
        <end position="146"/>
    </location>
</feature>
<feature type="turn" evidence="3">
    <location>
        <begin position="153"/>
        <end position="155"/>
    </location>
</feature>
<feature type="strand" evidence="3">
    <location>
        <begin position="157"/>
        <end position="159"/>
    </location>
</feature>
<feature type="strand" evidence="3">
    <location>
        <begin position="167"/>
        <end position="170"/>
    </location>
</feature>
<feature type="turn" evidence="3">
    <location>
        <begin position="174"/>
        <end position="176"/>
    </location>
</feature>
<feature type="strand" evidence="3">
    <location>
        <begin position="181"/>
        <end position="190"/>
    </location>
</feature>
<feature type="helix" evidence="3">
    <location>
        <begin position="192"/>
        <end position="194"/>
    </location>
</feature>
<feature type="helix" evidence="3">
    <location>
        <begin position="196"/>
        <end position="204"/>
    </location>
</feature>
<feature type="helix" evidence="3">
    <location>
        <begin position="210"/>
        <end position="220"/>
    </location>
</feature>
<feature type="strand" evidence="3">
    <location>
        <begin position="234"/>
        <end position="236"/>
    </location>
</feature>
<feature type="strand" evidence="3">
    <location>
        <begin position="244"/>
        <end position="246"/>
    </location>
</feature>
<feature type="helix" evidence="3">
    <location>
        <begin position="253"/>
        <end position="256"/>
    </location>
</feature>
<feature type="helix" evidence="3">
    <location>
        <begin position="257"/>
        <end position="259"/>
    </location>
</feature>
<feature type="helix" evidence="3">
    <location>
        <begin position="260"/>
        <end position="271"/>
    </location>
</feature>
<feature type="turn" evidence="3">
    <location>
        <begin position="275"/>
        <end position="278"/>
    </location>
</feature>
<feature type="helix" evidence="3">
    <location>
        <begin position="279"/>
        <end position="282"/>
    </location>
</feature>
<feature type="strand" evidence="3">
    <location>
        <begin position="289"/>
        <end position="296"/>
    </location>
</feature>
<feature type="helix" evidence="3">
    <location>
        <begin position="297"/>
        <end position="299"/>
    </location>
</feature>
<feature type="helix" evidence="3">
    <location>
        <begin position="300"/>
        <end position="304"/>
    </location>
</feature>
<feature type="helix" evidence="3">
    <location>
        <begin position="306"/>
        <end position="312"/>
    </location>
</feature>
<feature type="strand" evidence="3">
    <location>
        <begin position="319"/>
        <end position="321"/>
    </location>
</feature>
<feature type="strand" evidence="3">
    <location>
        <begin position="338"/>
        <end position="340"/>
    </location>
</feature>
<feature type="turn" evidence="3">
    <location>
        <begin position="347"/>
        <end position="350"/>
    </location>
</feature>
<feature type="helix" evidence="3">
    <location>
        <begin position="355"/>
        <end position="358"/>
    </location>
</feature>
<feature type="turn" evidence="3">
    <location>
        <begin position="359"/>
        <end position="361"/>
    </location>
</feature>
<feature type="helix" evidence="3">
    <location>
        <begin position="364"/>
        <end position="373"/>
    </location>
</feature>
<feature type="strand" evidence="3">
    <location>
        <begin position="377"/>
        <end position="379"/>
    </location>
</feature>
<feature type="strand" evidence="3">
    <location>
        <begin position="381"/>
        <end position="383"/>
    </location>
</feature>
<feature type="helix" evidence="3">
    <location>
        <begin position="385"/>
        <end position="394"/>
    </location>
</feature>
<feature type="helix" evidence="3">
    <location>
        <begin position="395"/>
        <end position="399"/>
    </location>
</feature>
<feature type="helix" evidence="3">
    <location>
        <begin position="400"/>
        <end position="413"/>
    </location>
</feature>
<feature type="helix" evidence="3">
    <location>
        <begin position="427"/>
        <end position="448"/>
    </location>
</feature>
<feature type="helix" evidence="3">
    <location>
        <begin position="452"/>
        <end position="471"/>
    </location>
</feature>
<feature type="helix" evidence="3">
    <location>
        <begin position="475"/>
        <end position="478"/>
    </location>
</feature>
<feature type="turn" evidence="3">
    <location>
        <begin position="479"/>
        <end position="481"/>
    </location>
</feature>
<feature type="helix" evidence="3">
    <location>
        <begin position="483"/>
        <end position="504"/>
    </location>
</feature>
<feature type="turn" evidence="3">
    <location>
        <begin position="505"/>
        <end position="507"/>
    </location>
</feature>
<feature type="helix" evidence="3">
    <location>
        <begin position="509"/>
        <end position="518"/>
    </location>
</feature>
<feature type="helix" evidence="3">
    <location>
        <begin position="550"/>
        <end position="559"/>
    </location>
</feature>
<feature type="turn" evidence="3">
    <location>
        <begin position="560"/>
        <end position="564"/>
    </location>
</feature>
<feature type="helix" evidence="3">
    <location>
        <begin position="566"/>
        <end position="576"/>
    </location>
</feature>
<feature type="helix" evidence="3">
    <location>
        <begin position="579"/>
        <end position="590"/>
    </location>
</feature>
<feature type="helix" evidence="3">
    <location>
        <begin position="591"/>
        <end position="594"/>
    </location>
</feature>
<feature type="helix" evidence="3">
    <location>
        <begin position="595"/>
        <end position="601"/>
    </location>
</feature>
<feature type="helix" evidence="2">
    <location>
        <begin position="620"/>
        <end position="624"/>
    </location>
</feature>
<feature type="strand" evidence="2">
    <location>
        <begin position="628"/>
        <end position="638"/>
    </location>
</feature>
<feature type="strand" evidence="2">
    <location>
        <begin position="646"/>
        <end position="651"/>
    </location>
</feature>
<feature type="strand" evidence="2">
    <location>
        <begin position="656"/>
        <end position="661"/>
    </location>
</feature>
<feature type="turn" evidence="2">
    <location>
        <begin position="664"/>
        <end position="666"/>
    </location>
</feature>
<feature type="helix" evidence="2">
    <location>
        <begin position="669"/>
        <end position="672"/>
    </location>
</feature>
<feature type="strand" evidence="2">
    <location>
        <begin position="676"/>
        <end position="680"/>
    </location>
</feature>
<feature type="strand" evidence="2">
    <location>
        <begin position="699"/>
        <end position="701"/>
    </location>
</feature>
<feature type="strand" evidence="2">
    <location>
        <begin position="706"/>
        <end position="708"/>
    </location>
</feature>
<protein>
    <recommendedName>
        <fullName evidence="1">Methionine--tRNA ligase</fullName>
        <ecNumber evidence="1">6.1.1.10</ecNumber>
    </recommendedName>
    <alternativeName>
        <fullName evidence="1">Methionyl-tRNA synthetase</fullName>
        <shortName evidence="1">MetRS</shortName>
    </alternativeName>
</protein>
<comment type="function">
    <text evidence="1">Is required not only for elongation of protein synthesis but also for the initiation of all mRNA translation through initiator tRNA(fMet) aminoacylation.</text>
</comment>
<comment type="catalytic activity">
    <reaction evidence="1">
        <text>tRNA(Met) + L-methionine + ATP = L-methionyl-tRNA(Met) + AMP + diphosphate</text>
        <dbReference type="Rhea" id="RHEA:13481"/>
        <dbReference type="Rhea" id="RHEA-COMP:9667"/>
        <dbReference type="Rhea" id="RHEA-COMP:9698"/>
        <dbReference type="ChEBI" id="CHEBI:30616"/>
        <dbReference type="ChEBI" id="CHEBI:33019"/>
        <dbReference type="ChEBI" id="CHEBI:57844"/>
        <dbReference type="ChEBI" id="CHEBI:78442"/>
        <dbReference type="ChEBI" id="CHEBI:78530"/>
        <dbReference type="ChEBI" id="CHEBI:456215"/>
        <dbReference type="EC" id="6.1.1.10"/>
    </reaction>
</comment>
<comment type="cofactor">
    <cofactor evidence="1">
        <name>Zn(2+)</name>
        <dbReference type="ChEBI" id="CHEBI:29105"/>
    </cofactor>
    <text evidence="1">Binds 1 zinc ion per subunit.</text>
</comment>
<comment type="subunit">
    <text evidence="1">Homodimer.</text>
</comment>
<comment type="subcellular location">
    <subcellularLocation>
        <location evidence="1">Cytoplasm</location>
    </subcellularLocation>
</comment>
<comment type="similarity">
    <text evidence="1">Belongs to the class-I aminoacyl-tRNA synthetase family. MetG type 1 subfamily.</text>
</comment>
<evidence type="ECO:0000255" key="1">
    <source>
        <dbReference type="HAMAP-Rule" id="MF_00098"/>
    </source>
</evidence>
<evidence type="ECO:0007829" key="2">
    <source>
        <dbReference type="PDB" id="1MKH"/>
    </source>
</evidence>
<evidence type="ECO:0007829" key="3">
    <source>
        <dbReference type="PDB" id="1RQG"/>
    </source>
</evidence>
<gene>
    <name evidence="1" type="primary">metG</name>
    <name type="synonym">metS</name>
    <name type="ordered locus">PYRAB09870</name>
    <name type="ORF">PAB2364</name>
</gene>
<reference key="1">
    <citation type="journal article" date="2003" name="Mol. Microbiol.">
        <title>An integrated analysis of the genome of the hyperthermophilic archaeon Pyrococcus abyssi.</title>
        <authorList>
            <person name="Cohen G.N."/>
            <person name="Barbe V."/>
            <person name="Flament D."/>
            <person name="Galperin M."/>
            <person name="Heilig R."/>
            <person name="Lecompte O."/>
            <person name="Poch O."/>
            <person name="Prieur D."/>
            <person name="Querellou J."/>
            <person name="Ripp R."/>
            <person name="Thierry J.-C."/>
            <person name="Van der Oost J."/>
            <person name="Weissenbach J."/>
            <person name="Zivanovic Y."/>
            <person name="Forterre P."/>
        </authorList>
    </citation>
    <scope>NUCLEOTIDE SEQUENCE [LARGE SCALE GENOMIC DNA]</scope>
    <source>
        <strain>GE5 / Orsay</strain>
    </source>
</reference>
<reference key="2">
    <citation type="journal article" date="2012" name="Curr. Microbiol.">
        <title>Re-annotation of two hyperthermophilic archaea Pyrococcus abyssi GE5 and Pyrococcus furiosus DSM 3638.</title>
        <authorList>
            <person name="Gao J."/>
            <person name="Wang J."/>
        </authorList>
    </citation>
    <scope>GENOME REANNOTATION</scope>
    <source>
        <strain>GE5 / Orsay</strain>
    </source>
</reference>
<keyword id="KW-0002">3D-structure</keyword>
<keyword id="KW-0030">Aminoacyl-tRNA synthetase</keyword>
<keyword id="KW-0067">ATP-binding</keyword>
<keyword id="KW-0963">Cytoplasm</keyword>
<keyword id="KW-0436">Ligase</keyword>
<keyword id="KW-0479">Metal-binding</keyword>
<keyword id="KW-0547">Nucleotide-binding</keyword>
<keyword id="KW-0648">Protein biosynthesis</keyword>
<keyword id="KW-0694">RNA-binding</keyword>
<keyword id="KW-0820">tRNA-binding</keyword>
<keyword id="KW-0862">Zinc</keyword>
<name>SYM_PYRAB</name>
<proteinExistence type="evidence at protein level"/>
<sequence>MVRYMVTSALPYANGPIHAGHLAGAYLPADIFVRYLRLKGEDVVFICGTDEHGTPISFRALKEGRSPREIVDEFHEQIKITFQRAKISFDFFGRTELPIHYKLSQEFFLKAYENGHLVKKVTKQAYCEHDKMFLPDRFVIGTCPYCGAEDQKGDQCEVCGRPLTPEILINPRCAICGRPISFRDSAHYYIKMQDFAERLKRWIEKQPWKPNVKNMVLSWIEEGLEERAITRDLNWGIPVPLDEEDMKGKVLYVWFEAPIGYISITIEHFKRIGKPNEWKKYWLNIDGQTRVIHFIGKDNIPFHAIFWPAFLMAYGKYKDEEVEAEWNLPYDIPANEYLTLEGKKFSTSRNWAIWVHEFLDVFPADYLRYYLTTIMPETRDSDFSFSDFKVRINEELVNNLGNFVHRALTFVNRYFDGVVPERGELDELDREALEEIEKAFKEVGELIMNYRFKDALKRVMSLASFGNRYFDHKQPWKTAKEDKVRTGTTVNISLQIVKALGILLEPFLPDASEKIWHLLNLDEVKRWEFRELPAGHKVRKPEILFKKVTDDQIIYFILNYMAKGNPEGARILLDKYYKREDVIRVAKEKFGDEAEVVLRRVYKDIKLKEKKEGKEMYVKFDDFAKLDLRVGKIIEVKDHPNADKLYVVKVDLGDEVRTLVAGLKKYYKPEELLNRYVVVVANLEPKKLRGIGSQGMLLAADDGERVALLMPDKEVKLGAKVR</sequence>
<accession>Q9V011</accession>
<accession>G8ZIF2</accession>